<sequence length="218" mass="24179">MSPSAGFQFSLYFLQTKKVLWKLTGLCYILLFTLCFFADQENGGKALASPPGIWKRADVTFDSNTAFSSLVVSANKKTVKNVGVPQVVPDNPERFNSSPCVLGSPGFRSGKHYFEVKYGTQREWAVGLAGKSVKRKGNLNLVPEERIWQTGLWWLRHLETDPGRVHSTSGKITVFVDYSGGNVIFDLNRIITILKANFSGEEVVPFFYLGGTVSLTTL</sequence>
<name>VESP_LACMU</name>
<organism>
    <name type="scientific">Lachesis muta muta</name>
    <name type="common">Bushmaster</name>
    <dbReference type="NCBI Taxonomy" id="8753"/>
    <lineage>
        <taxon>Eukaryota</taxon>
        <taxon>Metazoa</taxon>
        <taxon>Chordata</taxon>
        <taxon>Craniata</taxon>
        <taxon>Vertebrata</taxon>
        <taxon>Euteleostomi</taxon>
        <taxon>Lepidosauria</taxon>
        <taxon>Squamata</taxon>
        <taxon>Bifurcata</taxon>
        <taxon>Unidentata</taxon>
        <taxon>Episquamata</taxon>
        <taxon>Toxicofera</taxon>
        <taxon>Serpentes</taxon>
        <taxon>Colubroidea</taxon>
        <taxon>Viperidae</taxon>
        <taxon>Crotalinae</taxon>
        <taxon>Lachesis</taxon>
    </lineage>
</organism>
<proteinExistence type="evidence at transcript level"/>
<keyword id="KW-0528">Neurotoxin</keyword>
<keyword id="KW-0964">Secreted</keyword>
<keyword id="KW-0732">Signal</keyword>
<keyword id="KW-0800">Toxin</keyword>
<feature type="signal peptide" evidence="3">
    <location>
        <begin position="1"/>
        <end position="40"/>
    </location>
</feature>
<feature type="propeptide" id="PRO_0000253026" evidence="3">
    <location>
        <begin position="41"/>
        <end position="48"/>
    </location>
</feature>
<feature type="chain" id="PRO_0000253027" description="Ohanin-like protein">
    <location>
        <begin position="49"/>
        <end position="155"/>
    </location>
</feature>
<feature type="propeptide" id="PRO_0000253028" evidence="1">
    <location>
        <begin position="156"/>
        <end position="218"/>
    </location>
</feature>
<feature type="domain" description="B30.2/SPRY" evidence="4">
    <location>
        <begin position="49"/>
        <end position="155"/>
    </location>
</feature>
<comment type="function">
    <text evidence="2">Neurotoxin that produces dose-dependent hypolocomotion and hyperalgesia in mice. May directly act on the central nervous system, as it is 6500-fold more potent when administered intracerebroventricularly than intraperitoneal.</text>
</comment>
<comment type="subcellular location">
    <subcellularLocation>
        <location evidence="6">Secreted</location>
    </subcellularLocation>
</comment>
<comment type="tissue specificity">
    <text evidence="6">Expressed by the venom gland.</text>
</comment>
<comment type="similarity">
    <text evidence="6">Belongs to the ohanin/vespryn family.</text>
</comment>
<accession>Q27J48</accession>
<dbReference type="EMBL" id="DQ396476">
    <property type="protein sequence ID" value="ABD52885.1"/>
    <property type="molecule type" value="mRNA"/>
</dbReference>
<dbReference type="SMR" id="Q27J48"/>
<dbReference type="GO" id="GO:0005576">
    <property type="term" value="C:extracellular region"/>
    <property type="evidence" value="ECO:0007669"/>
    <property type="project" value="UniProtKB-SubCell"/>
</dbReference>
<dbReference type="GO" id="GO:0090729">
    <property type="term" value="F:toxin activity"/>
    <property type="evidence" value="ECO:0007669"/>
    <property type="project" value="UniProtKB-KW"/>
</dbReference>
<dbReference type="Gene3D" id="2.60.120.920">
    <property type="match status" value="1"/>
</dbReference>
<dbReference type="InterPro" id="IPR001870">
    <property type="entry name" value="B30.2/SPRY"/>
</dbReference>
<dbReference type="InterPro" id="IPR043136">
    <property type="entry name" value="B30.2/SPRY_sf"/>
</dbReference>
<dbReference type="InterPro" id="IPR003879">
    <property type="entry name" value="Butyrophylin_SPRY"/>
</dbReference>
<dbReference type="InterPro" id="IPR013320">
    <property type="entry name" value="ConA-like_dom_sf"/>
</dbReference>
<dbReference type="InterPro" id="IPR006574">
    <property type="entry name" value="PRY"/>
</dbReference>
<dbReference type="InterPro" id="IPR003877">
    <property type="entry name" value="SPRY_dom"/>
</dbReference>
<dbReference type="InterPro" id="IPR050143">
    <property type="entry name" value="TRIM/RBCC"/>
</dbReference>
<dbReference type="PANTHER" id="PTHR24103">
    <property type="entry name" value="E3 UBIQUITIN-PROTEIN LIGASE TRIM"/>
    <property type="match status" value="1"/>
</dbReference>
<dbReference type="Pfam" id="PF13765">
    <property type="entry name" value="PRY"/>
    <property type="match status" value="1"/>
</dbReference>
<dbReference type="Pfam" id="PF00622">
    <property type="entry name" value="SPRY"/>
    <property type="match status" value="1"/>
</dbReference>
<dbReference type="PRINTS" id="PR01407">
    <property type="entry name" value="BUTYPHLNCDUF"/>
</dbReference>
<dbReference type="SMART" id="SM00589">
    <property type="entry name" value="PRY"/>
    <property type="match status" value="1"/>
</dbReference>
<dbReference type="SMART" id="SM00449">
    <property type="entry name" value="SPRY"/>
    <property type="match status" value="1"/>
</dbReference>
<dbReference type="SUPFAM" id="SSF49899">
    <property type="entry name" value="Concanavalin A-like lectins/glucanases"/>
    <property type="match status" value="1"/>
</dbReference>
<dbReference type="PROSITE" id="PS50188">
    <property type="entry name" value="B302_SPRY"/>
    <property type="match status" value="1"/>
</dbReference>
<reference key="1">
    <citation type="journal article" date="2006" name="Genetics">
        <title>Lachesis muta (Viperidae) cDNAs reveal diverging pit viper molecules and scaffolds typical of cobra (Elapidae) venoms: implications for snake toxin repertoire evolution.</title>
        <authorList>
            <person name="Junqueira-de-Azevedo I.L.M."/>
            <person name="Ching A.T.C."/>
            <person name="Carvalho E."/>
            <person name="Faria F."/>
            <person name="Nishiyama M.Y. Jr."/>
            <person name="Ho P.L."/>
            <person name="Diniz M.R.V."/>
        </authorList>
    </citation>
    <scope>NUCLEOTIDE SEQUENCE [MRNA]</scope>
    <source>
        <tissue>Venom gland</tissue>
    </source>
</reference>
<evidence type="ECO:0000250" key="1"/>
<evidence type="ECO:0000250" key="2">
    <source>
        <dbReference type="UniProtKB" id="P83234"/>
    </source>
</evidence>
<evidence type="ECO:0000255" key="3"/>
<evidence type="ECO:0000255" key="4">
    <source>
        <dbReference type="PROSITE-ProRule" id="PRU00548"/>
    </source>
</evidence>
<evidence type="ECO:0000303" key="5">
    <source>
    </source>
</evidence>
<evidence type="ECO:0000305" key="6"/>
<protein>
    <recommendedName>
        <fullName evidence="5">Ohanin-like protein</fullName>
    </recommendedName>
</protein>